<dbReference type="EC" id="2.5.1.6" evidence="5"/>
<dbReference type="EMBL" id="AF187820">
    <property type="protein sequence ID" value="AAG17035.1"/>
    <property type="molecule type" value="mRNA"/>
</dbReference>
<dbReference type="SMR" id="Q9FVG8"/>
<dbReference type="UniPathway" id="UPA00315">
    <property type="reaction ID" value="UER00080"/>
</dbReference>
<dbReference type="GO" id="GO:0005737">
    <property type="term" value="C:cytoplasm"/>
    <property type="evidence" value="ECO:0007669"/>
    <property type="project" value="UniProtKB-SubCell"/>
</dbReference>
<dbReference type="GO" id="GO:0005524">
    <property type="term" value="F:ATP binding"/>
    <property type="evidence" value="ECO:0007669"/>
    <property type="project" value="UniProtKB-KW"/>
</dbReference>
<dbReference type="GO" id="GO:0046872">
    <property type="term" value="F:metal ion binding"/>
    <property type="evidence" value="ECO:0007669"/>
    <property type="project" value="UniProtKB-KW"/>
</dbReference>
<dbReference type="GO" id="GO:0004478">
    <property type="term" value="F:methionine adenosyltransferase activity"/>
    <property type="evidence" value="ECO:0007669"/>
    <property type="project" value="UniProtKB-EC"/>
</dbReference>
<dbReference type="GO" id="GO:0006730">
    <property type="term" value="P:one-carbon metabolic process"/>
    <property type="evidence" value="ECO:0007669"/>
    <property type="project" value="UniProtKB-KW"/>
</dbReference>
<dbReference type="GO" id="GO:0006556">
    <property type="term" value="P:S-adenosylmethionine biosynthetic process"/>
    <property type="evidence" value="ECO:0007669"/>
    <property type="project" value="UniProtKB-UniPathway"/>
</dbReference>
<dbReference type="CDD" id="cd18079">
    <property type="entry name" value="S-AdoMet_synt"/>
    <property type="match status" value="1"/>
</dbReference>
<dbReference type="FunFam" id="3.30.300.10:FF:000003">
    <property type="entry name" value="S-adenosylmethionine synthase"/>
    <property type="match status" value="1"/>
</dbReference>
<dbReference type="Gene3D" id="3.30.300.10">
    <property type="match status" value="3"/>
</dbReference>
<dbReference type="HAMAP" id="MF_00086">
    <property type="entry name" value="S_AdoMet_synth1"/>
    <property type="match status" value="1"/>
</dbReference>
<dbReference type="InterPro" id="IPR022631">
    <property type="entry name" value="ADOMET_SYNTHASE_CS"/>
</dbReference>
<dbReference type="InterPro" id="IPR022630">
    <property type="entry name" value="S-AdoMet_synt_C"/>
</dbReference>
<dbReference type="InterPro" id="IPR022629">
    <property type="entry name" value="S-AdoMet_synt_central"/>
</dbReference>
<dbReference type="InterPro" id="IPR022628">
    <property type="entry name" value="S-AdoMet_synt_N"/>
</dbReference>
<dbReference type="InterPro" id="IPR002133">
    <property type="entry name" value="S-AdoMet_synthetase"/>
</dbReference>
<dbReference type="InterPro" id="IPR022636">
    <property type="entry name" value="S-AdoMet_synthetase_sfam"/>
</dbReference>
<dbReference type="NCBIfam" id="TIGR01034">
    <property type="entry name" value="metK"/>
    <property type="match status" value="1"/>
</dbReference>
<dbReference type="PANTHER" id="PTHR11964">
    <property type="entry name" value="S-ADENOSYLMETHIONINE SYNTHETASE"/>
    <property type="match status" value="1"/>
</dbReference>
<dbReference type="Pfam" id="PF02773">
    <property type="entry name" value="S-AdoMet_synt_C"/>
    <property type="match status" value="1"/>
</dbReference>
<dbReference type="Pfam" id="PF02772">
    <property type="entry name" value="S-AdoMet_synt_M"/>
    <property type="match status" value="1"/>
</dbReference>
<dbReference type="Pfam" id="PF00438">
    <property type="entry name" value="S-AdoMet_synt_N"/>
    <property type="match status" value="1"/>
</dbReference>
<dbReference type="PIRSF" id="PIRSF000497">
    <property type="entry name" value="MAT"/>
    <property type="match status" value="1"/>
</dbReference>
<dbReference type="SUPFAM" id="SSF55973">
    <property type="entry name" value="S-adenosylmethionine synthetase"/>
    <property type="match status" value="3"/>
</dbReference>
<dbReference type="PROSITE" id="PS00376">
    <property type="entry name" value="ADOMET_SYNTHASE_1"/>
    <property type="match status" value="1"/>
</dbReference>
<dbReference type="PROSITE" id="PS00377">
    <property type="entry name" value="ADOMET_SYNTHASE_2"/>
    <property type="match status" value="1"/>
</dbReference>
<feature type="chain" id="PRO_0000363040" description="S-adenosylmethionine synthase 1">
    <location>
        <begin position="1"/>
        <end position="388"/>
    </location>
</feature>
<feature type="binding site" evidence="3">
    <location>
        <position position="11"/>
    </location>
    <ligand>
        <name>Mg(2+)</name>
        <dbReference type="ChEBI" id="CHEBI:18420"/>
    </ligand>
</feature>
<feature type="binding site" description="in other chain" evidence="4">
    <location>
        <position position="17"/>
    </location>
    <ligand>
        <name>ATP</name>
        <dbReference type="ChEBI" id="CHEBI:30616"/>
        <note>ligand shared between two neighboring subunits</note>
    </ligand>
</feature>
<feature type="binding site" evidence="2">
    <location>
        <position position="45"/>
    </location>
    <ligand>
        <name>K(+)</name>
        <dbReference type="ChEBI" id="CHEBI:29103"/>
    </ligand>
</feature>
<feature type="binding site" description="in other chain" evidence="2">
    <location>
        <position position="58"/>
    </location>
    <ligand>
        <name>L-methionine</name>
        <dbReference type="ChEBI" id="CHEBI:57844"/>
        <note>ligand shared between two neighboring subunits</note>
    </ligand>
</feature>
<feature type="binding site" description="in other chain" evidence="2">
    <location>
        <position position="101"/>
    </location>
    <ligand>
        <name>L-methionine</name>
        <dbReference type="ChEBI" id="CHEBI:57844"/>
        <note>ligand shared between two neighboring subunits</note>
    </ligand>
</feature>
<feature type="binding site" description="in other chain" evidence="4">
    <location>
        <begin position="168"/>
        <end position="170"/>
    </location>
    <ligand>
        <name>ATP</name>
        <dbReference type="ChEBI" id="CHEBI:30616"/>
        <note>ligand shared between two neighboring subunits</note>
    </ligand>
</feature>
<feature type="binding site" description="in other chain" evidence="4">
    <location>
        <begin position="233"/>
        <end position="236"/>
    </location>
    <ligand>
        <name>ATP</name>
        <dbReference type="ChEBI" id="CHEBI:30616"/>
        <note>ligand shared between two neighboring subunits</note>
    </ligand>
</feature>
<feature type="binding site" description="in other chain" evidence="4">
    <location>
        <position position="244"/>
    </location>
    <ligand>
        <name>ATP</name>
        <dbReference type="ChEBI" id="CHEBI:30616"/>
        <note>ligand shared between two neighboring subunits</note>
    </ligand>
</feature>
<feature type="binding site" evidence="2">
    <location>
        <position position="244"/>
    </location>
    <ligand>
        <name>L-methionine</name>
        <dbReference type="ChEBI" id="CHEBI:57844"/>
        <note>ligand shared between two neighboring subunits</note>
    </ligand>
</feature>
<feature type="binding site" description="in other chain" evidence="2">
    <location>
        <begin position="250"/>
        <end position="251"/>
    </location>
    <ligand>
        <name>ATP</name>
        <dbReference type="ChEBI" id="CHEBI:30616"/>
        <note>ligand shared between two neighboring subunits</note>
    </ligand>
</feature>
<feature type="binding site" evidence="2">
    <location>
        <position position="267"/>
    </location>
    <ligand>
        <name>ATP</name>
        <dbReference type="ChEBI" id="CHEBI:30616"/>
        <note>ligand shared between two neighboring subunits</note>
    </ligand>
</feature>
<feature type="binding site" evidence="2">
    <location>
        <position position="271"/>
    </location>
    <ligand>
        <name>ATP</name>
        <dbReference type="ChEBI" id="CHEBI:30616"/>
        <note>ligand shared between two neighboring subunits</note>
    </ligand>
</feature>
<feature type="binding site" evidence="3">
    <location>
        <position position="275"/>
    </location>
    <ligand>
        <name>ATP</name>
        <dbReference type="ChEBI" id="CHEBI:30616"/>
        <note>ligand shared between two neighboring subunits</note>
    </ligand>
</feature>
<feature type="binding site" description="in other chain" evidence="2">
    <location>
        <position position="275"/>
    </location>
    <ligand>
        <name>L-methionine</name>
        <dbReference type="ChEBI" id="CHEBI:57844"/>
        <note>ligand shared between two neighboring subunits</note>
    </ligand>
</feature>
<proteinExistence type="evidence at transcript level"/>
<keyword id="KW-0067">ATP-binding</keyword>
<keyword id="KW-0170">Cobalt</keyword>
<keyword id="KW-0963">Cytoplasm</keyword>
<keyword id="KW-0460">Magnesium</keyword>
<keyword id="KW-0479">Metal-binding</keyword>
<keyword id="KW-0547">Nucleotide-binding</keyword>
<keyword id="KW-0554">One-carbon metabolism</keyword>
<keyword id="KW-0630">Potassium</keyword>
<keyword id="KW-0808">Transferase</keyword>
<accession>Q9FVG8</accession>
<comment type="function">
    <text evidence="5">Catalyzes the formation of S-adenosylmethionine from methionine and ATP. The reaction comprises two steps that are both catalyzed by the same enzyme: formation of S-adenosylmethionine (AdoMet) and triphosphate, and subsequent hydrolysis of the triphosphate.</text>
</comment>
<comment type="catalytic activity">
    <reaction evidence="5">
        <text>L-methionine + ATP + H2O = S-adenosyl-L-methionine + phosphate + diphosphate</text>
        <dbReference type="Rhea" id="RHEA:21080"/>
        <dbReference type="ChEBI" id="CHEBI:15377"/>
        <dbReference type="ChEBI" id="CHEBI:30616"/>
        <dbReference type="ChEBI" id="CHEBI:33019"/>
        <dbReference type="ChEBI" id="CHEBI:43474"/>
        <dbReference type="ChEBI" id="CHEBI:57844"/>
        <dbReference type="ChEBI" id="CHEBI:59789"/>
        <dbReference type="EC" id="2.5.1.6"/>
    </reaction>
</comment>
<comment type="cofactor">
    <cofactor evidence="5">
        <name>Mn(2+)</name>
        <dbReference type="ChEBI" id="CHEBI:29035"/>
    </cofactor>
    <cofactor evidence="5">
        <name>Mg(2+)</name>
        <dbReference type="ChEBI" id="CHEBI:18420"/>
    </cofactor>
    <cofactor evidence="5">
        <name>Co(2+)</name>
        <dbReference type="ChEBI" id="CHEBI:48828"/>
    </cofactor>
    <text evidence="3 5">Binds 2 divalent ions per subunit. The metal ions interact primarily with the substrate (By similarity). Can utilize magnesium, manganese or cobalt (in vitro) (By similarity).</text>
</comment>
<comment type="cofactor">
    <cofactor evidence="5">
        <name>K(+)</name>
        <dbReference type="ChEBI" id="CHEBI:29103"/>
    </cofactor>
    <text evidence="3">Binds 1 potassium ion per subunit. The potassium ion interacts primarily with the substrate (By similarity).</text>
</comment>
<comment type="pathway">
    <text evidence="5">Amino-acid biosynthesis; S-adenosyl-L-methionine biosynthesis; S-adenosyl-L-methionine from L-methionine: step 1/1.</text>
</comment>
<comment type="subunit">
    <text evidence="1">Homotetramer.</text>
</comment>
<comment type="subcellular location">
    <subcellularLocation>
        <location evidence="1">Cytoplasm</location>
    </subcellularLocation>
</comment>
<comment type="tissue specificity">
    <text evidence="6">Mostly in Roots.</text>
</comment>
<comment type="developmental stage">
    <text evidence="6">Induced in the cells forming the adventitious root primordium in connection to the primary xylem. Accumulates in the protruding adventitious roots.</text>
</comment>
<comment type="similarity">
    <text evidence="7">Belongs to the AdoMet synthase family.</text>
</comment>
<reference key="1">
    <citation type="journal article" date="2001" name="Plant Mol. Biol.">
        <title>Two S-adenosylmethionine synthetase-encoding genes differentially expressed during adventitious root development in Pinus contorta.</title>
        <authorList>
            <person name="Lindroth A.M."/>
            <person name="Saarikoski P."/>
            <person name="Flygh G."/>
            <person name="Clapham D."/>
            <person name="Groenroos R."/>
            <person name="Thelander M."/>
            <person name="Ronne H."/>
            <person name="von Arnold S."/>
        </authorList>
    </citation>
    <scope>NUCLEOTIDE SEQUENCE [MRNA]</scope>
    <scope>TISSUE SPECIFICITY</scope>
    <scope>DEVELOPMENTAL STAGE</scope>
    <source>
        <tissue>Root</tissue>
    </source>
</reference>
<protein>
    <recommendedName>
        <fullName>S-adenosylmethionine synthase 1</fullName>
        <shortName>AdoMet synthase 1</shortName>
        <ecNumber evidence="5">2.5.1.6</ecNumber>
    </recommendedName>
    <alternativeName>
        <fullName>Methionine adenosyltransferase 1</fullName>
        <shortName>MAT 1</shortName>
    </alternativeName>
</protein>
<name>METK1_PINCO</name>
<organism>
    <name type="scientific">Pinus contorta</name>
    <name type="common">Shore pine</name>
    <name type="synonym">Lodgepole pine</name>
    <dbReference type="NCBI Taxonomy" id="3339"/>
    <lineage>
        <taxon>Eukaryota</taxon>
        <taxon>Viridiplantae</taxon>
        <taxon>Streptophyta</taxon>
        <taxon>Embryophyta</taxon>
        <taxon>Tracheophyta</taxon>
        <taxon>Spermatophyta</taxon>
        <taxon>Pinopsida</taxon>
        <taxon>Pinidae</taxon>
        <taxon>Conifers I</taxon>
        <taxon>Pinales</taxon>
        <taxon>Pinaceae</taxon>
        <taxon>Pinus</taxon>
        <taxon>Pinus subgen. Pinus</taxon>
    </lineage>
</organism>
<evidence type="ECO:0000250" key="1"/>
<evidence type="ECO:0000250" key="2">
    <source>
        <dbReference type="UniProtKB" id="P0A817"/>
    </source>
</evidence>
<evidence type="ECO:0000250" key="3">
    <source>
        <dbReference type="UniProtKB" id="P13444"/>
    </source>
</evidence>
<evidence type="ECO:0000250" key="4">
    <source>
        <dbReference type="UniProtKB" id="Q00266"/>
    </source>
</evidence>
<evidence type="ECO:0000250" key="5">
    <source>
        <dbReference type="UniProtKB" id="Q96551"/>
    </source>
</evidence>
<evidence type="ECO:0000269" key="6">
    <source>
    </source>
</evidence>
<evidence type="ECO:0000305" key="7"/>
<sequence length="388" mass="42315">MFIMTKYFTSESVSAGHPDKIADQIADAILDAVLAQDPYARSAVEVTTSTGDVSIFGELSTSAYVNVRQIAMDTIREIGYNQAELGFTADSVNVSNRIVEQSGDIAQAVDSADDDPEQLGAGDQGMVFGYATNETDNYLPLTLALSHRLMRQIRDVREAGTLNYLRPDAKAEVSVELDDNNQVSRIAAVVLSTQHDETVTLDQLREDVRRLVIDPVLPQELVDDETIYYINPSGRFVLGGPQADSGLTGRKIIVDTYGGAAHHGGGAFSGKDATKVDRSAAYFARYVAKNLVAAGVADKLELQVAYAIGVAQPVSLNIETFGTAKIDEDKIRDITAQLFDFRPLAIINHLDLRRPIYKQTAAFGHFGRTDIDLPWEALDQVDKIKALM</sequence>
<gene>
    <name type="primary">SAMS1</name>
</gene>